<keyword id="KW-0150">Chloroplast</keyword>
<keyword id="KW-0223">Dioxygenase</keyword>
<keyword id="KW-0408">Iron</keyword>
<keyword id="KW-0479">Metal-binding</keyword>
<keyword id="KW-0560">Oxidoreductase</keyword>
<keyword id="KW-0934">Plastid</keyword>
<keyword id="KW-1185">Reference proteome</keyword>
<keyword id="KW-0809">Transit peptide</keyword>
<reference key="1">
    <citation type="journal article" date="1999" name="Nature">
        <title>Sequence and analysis of chromosome 2 of the plant Arabidopsis thaliana.</title>
        <authorList>
            <person name="Lin X."/>
            <person name="Kaul S."/>
            <person name="Rounsley S.D."/>
            <person name="Shea T.P."/>
            <person name="Benito M.-I."/>
            <person name="Town C.D."/>
            <person name="Fujii C.Y."/>
            <person name="Mason T.M."/>
            <person name="Bowman C.L."/>
            <person name="Barnstead M.E."/>
            <person name="Feldblyum T.V."/>
            <person name="Buell C.R."/>
            <person name="Ketchum K.A."/>
            <person name="Lee J.J."/>
            <person name="Ronning C.M."/>
            <person name="Koo H.L."/>
            <person name="Moffat K.S."/>
            <person name="Cronin L.A."/>
            <person name="Shen M."/>
            <person name="Pai G."/>
            <person name="Van Aken S."/>
            <person name="Umayam L."/>
            <person name="Tallon L.J."/>
            <person name="Gill J.E."/>
            <person name="Adams M.D."/>
            <person name="Carrera A.J."/>
            <person name="Creasy T.H."/>
            <person name="Goodman H.M."/>
            <person name="Somerville C.R."/>
            <person name="Copenhaver G.P."/>
            <person name="Preuss D."/>
            <person name="Nierman W.C."/>
            <person name="White O."/>
            <person name="Eisen J.A."/>
            <person name="Salzberg S.L."/>
            <person name="Fraser C.M."/>
            <person name="Venter J.C."/>
        </authorList>
    </citation>
    <scope>NUCLEOTIDE SEQUENCE [LARGE SCALE GENOMIC DNA]</scope>
    <source>
        <strain>cv. Columbia</strain>
    </source>
</reference>
<reference key="2">
    <citation type="journal article" date="2017" name="Plant J.">
        <title>Araport11: a complete reannotation of the Arabidopsis thaliana reference genome.</title>
        <authorList>
            <person name="Cheng C.Y."/>
            <person name="Krishnakumar V."/>
            <person name="Chan A.P."/>
            <person name="Thibaud-Nissen F."/>
            <person name="Schobel S."/>
            <person name="Town C.D."/>
        </authorList>
    </citation>
    <scope>GENOME REANNOTATION</scope>
    <source>
        <strain>cv. Columbia</strain>
    </source>
</reference>
<reference key="3">
    <citation type="submission" date="2006-07" db="EMBL/GenBank/DDBJ databases">
        <title>Large-scale analysis of RIKEN Arabidopsis full-length (RAFL) cDNAs.</title>
        <authorList>
            <person name="Totoki Y."/>
            <person name="Seki M."/>
            <person name="Ishida J."/>
            <person name="Nakajima M."/>
            <person name="Enju A."/>
            <person name="Kamiya A."/>
            <person name="Narusaka M."/>
            <person name="Shin-i T."/>
            <person name="Nakagawa M."/>
            <person name="Sakamoto N."/>
            <person name="Oishi K."/>
            <person name="Kohara Y."/>
            <person name="Kobayashi M."/>
            <person name="Toyoda A."/>
            <person name="Sakaki Y."/>
            <person name="Sakurai T."/>
            <person name="Iida K."/>
            <person name="Akiyama K."/>
            <person name="Satou M."/>
            <person name="Toyoda T."/>
            <person name="Konagaya A."/>
            <person name="Carninci P."/>
            <person name="Kawai J."/>
            <person name="Hayashizaki Y."/>
            <person name="Shinozaki K."/>
        </authorList>
    </citation>
    <scope>NUCLEOTIDE SEQUENCE [LARGE SCALE MRNA] OF 1-254</scope>
    <source>
        <strain>cv. Columbia</strain>
    </source>
</reference>
<reference key="4">
    <citation type="journal article" date="2004" name="Curr. Biol.">
        <title>MAX3/CCD7 is a carotenoid cleavage dioxygenase required for the synthesis of a novel plant signaling molecule.</title>
        <authorList>
            <person name="Booker J."/>
            <person name="Auldridge M."/>
            <person name="Wills S."/>
            <person name="McCarty D."/>
            <person name="Klee H."/>
            <person name="Leyser O."/>
        </authorList>
    </citation>
    <scope>FUNCTION</scope>
    <scope>TISSUE SPECIFICITY</scope>
    <scope>SUBCELLULAR LOCATION</scope>
</reference>
<reference key="5">
    <citation type="journal article" date="2004" name="J. Biol. Chem.">
        <title>The biochemical characterization of two carotenoid cleavage enzymes from Arabidopsis indicates that a carotenoid-derived compound inhibits lateral branching.</title>
        <authorList>
            <person name="Schwartz S.H."/>
            <person name="Qin X."/>
            <person name="Loewen M.C."/>
        </authorList>
    </citation>
    <scope>BIOPHYSICOCHEMICAL PROPERTIES</scope>
    <scope>DISRUPTION PHENOTYPE</scope>
</reference>
<reference key="6">
    <citation type="journal article" date="2006" name="Plant J.">
        <title>Characterization of three members of the Arabidopsis carotenoid cleavage dioxygenase family demonstrates the divergent roles of this multifunctional enzyme family.</title>
        <authorList>
            <person name="Auldridge M.E."/>
            <person name="Block A."/>
            <person name="Vogel J.T."/>
            <person name="Dabney-Smith C."/>
            <person name="Mila I."/>
            <person name="Bouzayen M."/>
            <person name="Magallanes-Lundback M."/>
            <person name="DellaPenna D."/>
            <person name="McCarty D.R."/>
            <person name="Klee H.J."/>
        </authorList>
    </citation>
    <scope>FUNCTION</scope>
    <scope>SUBCELLULAR LOCATION</scope>
    <scope>TISSUE SPECIFICITY</scope>
</reference>
<reference key="7">
    <citation type="journal article" date="2011" name="Plant Cell Rep.">
        <title>Vascular-specific activity of the Arabidopsis carotenoid cleavage dioxygenase 7 gene promoter.</title>
        <authorList>
            <person name="Liang Y.S."/>
            <person name="Jeon Y.A."/>
            <person name="Lim S.H."/>
            <person name="Kim J.K."/>
            <person name="Lee J.Y."/>
            <person name="Kim Y.M."/>
            <person name="Lee Y.H."/>
            <person name="Ha S.H."/>
        </authorList>
    </citation>
    <scope>TISSUE SPECIFICITY</scope>
</reference>
<reference key="8">
    <citation type="journal article" date="2012" name="Science">
        <title>The path from beta-carotene to carlactone, a strigolactone-like plant hormone.</title>
        <authorList>
            <person name="Alder A."/>
            <person name="Jamil M."/>
            <person name="Marzorati M."/>
            <person name="Bruno M."/>
            <person name="Vermathen M."/>
            <person name="Bigler P."/>
            <person name="Ghisla S."/>
            <person name="Bouwmeester H."/>
            <person name="Beyer P."/>
            <person name="Al-Babili S."/>
        </authorList>
    </citation>
    <scope>CATALYTIC ACTIVITY</scope>
</reference>
<reference key="9">
    <citation type="journal article" date="2013" name="Mol. Plant">
        <title>Selective mimics of strigolactone actions and their potential use for controlling damage caused by root parasitic weeds.</title>
        <authorList>
            <person name="Fukui K."/>
            <person name="Ito S."/>
            <person name="Asami T."/>
        </authorList>
    </citation>
    <scope>DISRUPTION PHENOTYPE</scope>
</reference>
<proteinExistence type="evidence at protein level"/>
<dbReference type="EC" id="1.13.11.68"/>
<dbReference type="EMBL" id="CP002685">
    <property type="protein sequence ID" value="AEC10494.2"/>
    <property type="molecule type" value="Genomic_DNA"/>
</dbReference>
<dbReference type="EMBL" id="AK229864">
    <property type="protein sequence ID" value="BAF01693.1"/>
    <property type="status" value="ALT_SEQ"/>
    <property type="molecule type" value="mRNA"/>
</dbReference>
<dbReference type="PIR" id="C84885">
    <property type="entry name" value="C84885"/>
</dbReference>
<dbReference type="RefSeq" id="NP_001318427.1">
    <property type="nucleotide sequence ID" value="NM_001337111.1"/>
</dbReference>
<dbReference type="SMR" id="Q7XJM2"/>
<dbReference type="FunCoup" id="Q7XJM2">
    <property type="interactions" value="28"/>
</dbReference>
<dbReference type="STRING" id="3702.Q7XJM2"/>
<dbReference type="PaxDb" id="3702-AT2G44990.1"/>
<dbReference type="EnsemblPlants" id="AT2G44990.1">
    <property type="protein sequence ID" value="AT2G44990.1"/>
    <property type="gene ID" value="AT2G44990"/>
</dbReference>
<dbReference type="GeneID" id="819107"/>
<dbReference type="Gramene" id="AT2G44990.1">
    <property type="protein sequence ID" value="AT2G44990.1"/>
    <property type="gene ID" value="AT2G44990"/>
</dbReference>
<dbReference type="KEGG" id="ath:AT2G44990"/>
<dbReference type="Araport" id="AT2G44990"/>
<dbReference type="TAIR" id="AT2G44990">
    <property type="gene designation" value="CCD7"/>
</dbReference>
<dbReference type="eggNOG" id="KOG1285">
    <property type="taxonomic scope" value="Eukaryota"/>
</dbReference>
<dbReference type="HOGENOM" id="CLU_016472_6_1_1"/>
<dbReference type="InParanoid" id="Q7XJM2"/>
<dbReference type="OMA" id="PYEVDPR"/>
<dbReference type="PhylomeDB" id="Q7XJM2"/>
<dbReference type="BioCyc" id="ARA:AT2G44990-MONOMER"/>
<dbReference type="BioCyc" id="MetaCyc:AT2G44990-MONOMER"/>
<dbReference type="BRENDA" id="1.13.11.68">
    <property type="organism ID" value="399"/>
</dbReference>
<dbReference type="BRENDA" id="1.13.11.71">
    <property type="organism ID" value="399"/>
</dbReference>
<dbReference type="SABIO-RK" id="Q7XJM2"/>
<dbReference type="PRO" id="PR:Q7XJM2"/>
<dbReference type="Proteomes" id="UP000006548">
    <property type="component" value="Chromosome 2"/>
</dbReference>
<dbReference type="ExpressionAtlas" id="Q7XJM2">
    <property type="expression patterns" value="baseline and differential"/>
</dbReference>
<dbReference type="GO" id="GO:0009507">
    <property type="term" value="C:chloroplast"/>
    <property type="evidence" value="ECO:0007669"/>
    <property type="project" value="UniProtKB-SubCell"/>
</dbReference>
<dbReference type="GO" id="GO:0102395">
    <property type="term" value="F:9-cis-beta-carotene 9',10'-cleavage oxygenase activity"/>
    <property type="evidence" value="ECO:0007669"/>
    <property type="project" value="UniProtKB-EC"/>
</dbReference>
<dbReference type="GO" id="GO:0046872">
    <property type="term" value="F:metal ion binding"/>
    <property type="evidence" value="ECO:0007669"/>
    <property type="project" value="UniProtKB-KW"/>
</dbReference>
<dbReference type="GO" id="GO:0016702">
    <property type="term" value="F:oxidoreductase activity, acting on single donors with incorporation of molecular oxygen, incorporation of two atoms of oxygen"/>
    <property type="evidence" value="ECO:0000314"/>
    <property type="project" value="UniProtKB"/>
</dbReference>
<dbReference type="GO" id="GO:0016121">
    <property type="term" value="P:carotene catabolic process"/>
    <property type="evidence" value="ECO:0000314"/>
    <property type="project" value="UniProtKB"/>
</dbReference>
<dbReference type="GO" id="GO:0010223">
    <property type="term" value="P:secondary shoot formation"/>
    <property type="evidence" value="ECO:0000315"/>
    <property type="project" value="UniProtKB"/>
</dbReference>
<dbReference type="GO" id="GO:1901601">
    <property type="term" value="P:strigolactone biosynthetic process"/>
    <property type="evidence" value="ECO:0000314"/>
    <property type="project" value="UniProtKB"/>
</dbReference>
<dbReference type="InterPro" id="IPR004294">
    <property type="entry name" value="Carotenoid_Oase"/>
</dbReference>
<dbReference type="PANTHER" id="PTHR10543">
    <property type="entry name" value="BETA-CAROTENE DIOXYGENASE"/>
    <property type="match status" value="1"/>
</dbReference>
<dbReference type="PANTHER" id="PTHR10543:SF37">
    <property type="entry name" value="CAROTENOID CLEAVAGE DIOXYGENASE 7, CHLOROPLASTIC"/>
    <property type="match status" value="1"/>
</dbReference>
<dbReference type="Pfam" id="PF03055">
    <property type="entry name" value="RPE65"/>
    <property type="match status" value="1"/>
</dbReference>
<evidence type="ECO:0000250" key="1"/>
<evidence type="ECO:0000255" key="2"/>
<evidence type="ECO:0000256" key="3">
    <source>
        <dbReference type="SAM" id="MobiDB-lite"/>
    </source>
</evidence>
<evidence type="ECO:0000269" key="4">
    <source>
    </source>
</evidence>
<evidence type="ECO:0000269" key="5">
    <source>
    </source>
</evidence>
<evidence type="ECO:0000269" key="6">
    <source>
    </source>
</evidence>
<evidence type="ECO:0000269" key="7">
    <source>
    </source>
</evidence>
<evidence type="ECO:0000269" key="8">
    <source>
    </source>
</evidence>
<evidence type="ECO:0000269" key="9">
    <source>
    </source>
</evidence>
<evidence type="ECO:0000305" key="10"/>
<evidence type="ECO:0000305" key="11">
    <source>
    </source>
</evidence>
<sequence length="618" mass="69453">MSLPIPPKFLPPLKSPPIHHHQTPPPLAPPRAAISISIPDTGLGRTGTILDESTSSAFRDYQSLFVSQRSETIEPVVIKPIEGSIPVNFPSGTYYLAGPGLFTDDHGSTVHPLDGHGYLRAFHIDGNKRKATFTAKYVKTEAKKEEHDPVTDTWRFTHRGPFSVLKGGKRFGNTKVMKNVANTSVLKWAGRLLCLWEGGEPYEIESGSLDTVGRFNVENNGCESCDDDDSSDRDLSGHDIWDTAADLLKPILQGVFKMPPKRFLSHYKVDGRRKRLLTVTCNAEDMLLPRSNFTFCEYDSEFKLIQTKEFKIDDHMMIHDWAFTDTHYILFANRVKLNPIGSIAAMCGMSPMVSALSLNPSNESSPIYILPRFSDKYSRGGRDWRVPVEVSSQLWLIHSGNAYETREDNGDLKIQIQASACSYRWFDFQKMFGYDWQSNKLDPSVMNLNRGDDKLLPHLVKVSMTLDSTGNCNSCDVEPLNGWNKPSDFPVINSSWSGKKNKYMYSAASSGTRSELPHFPFDMVVKFDLDSNLVRTWSTGARRFVGEPMFVPKNSVEEGEEEDDGYIVVVEYAVSVERCYLVILDAKKIGESDAVVSRLEVPRNLTFPMGFHGLWASD</sequence>
<name>CCD7_ARATH</name>
<feature type="transit peptide" description="Chloroplast" evidence="2">
    <location>
        <begin position="1"/>
        <end position="31"/>
    </location>
</feature>
<feature type="chain" id="PRO_0000285996" description="Carotenoid cleavage dioxygenase 7, chloroplastic">
    <location>
        <begin position="32"/>
        <end position="618"/>
    </location>
</feature>
<feature type="region of interest" description="Disordered" evidence="3">
    <location>
        <begin position="11"/>
        <end position="34"/>
    </location>
</feature>
<feature type="binding site" evidence="1">
    <location>
        <position position="266"/>
    </location>
    <ligand>
        <name>Fe cation</name>
        <dbReference type="ChEBI" id="CHEBI:24875"/>
        <note>catalytic</note>
    </ligand>
</feature>
<feature type="binding site" evidence="1">
    <location>
        <position position="319"/>
    </location>
    <ligand>
        <name>Fe cation</name>
        <dbReference type="ChEBI" id="CHEBI:24875"/>
        <note>catalytic</note>
    </ligand>
</feature>
<feature type="binding site" evidence="1">
    <location>
        <position position="398"/>
    </location>
    <ligand>
        <name>Fe cation</name>
        <dbReference type="ChEBI" id="CHEBI:24875"/>
        <note>catalytic</note>
    </ligand>
</feature>
<feature type="binding site" evidence="1">
    <location>
        <position position="612"/>
    </location>
    <ligand>
        <name>Fe cation</name>
        <dbReference type="ChEBI" id="CHEBI:24875"/>
        <note>catalytic</note>
    </ligand>
</feature>
<comment type="function">
    <text evidence="4 6">Involved in strigolactones biosynthesis by cleaving asymmetrically a variety of linear and cyclic carotenoids at the 9-10 double bond. Produces one C(13) beta-ionone and the C(27) 10'-apo-beta-carotenal. Strigolactones are hormones that inhibit tillering and shoot branching through the MAX-dependent pathway, contribute to the regulation of shoot architectural response to phosphate-limiting conditions and function as rhizosphere signal that stimulates hyphal branching of arbuscular mycorrhizal fungi and trigger seed germination of root parasitic weeds. No activity on lycopene, lutein, zeaxanthin, violaxanthin or neoxanthin. Probably not involved in abscisic acid biosynthesis.</text>
</comment>
<comment type="catalytic activity">
    <reaction evidence="8">
        <text>9-cis-beta-carotene + O2 = 9-cis-10'-apo-beta-carotenal + beta-ionone</text>
        <dbReference type="Rhea" id="RHEA:34399"/>
        <dbReference type="ChEBI" id="CHEBI:15379"/>
        <dbReference type="ChEBI" id="CHEBI:32325"/>
        <dbReference type="ChEBI" id="CHEBI:67188"/>
        <dbReference type="ChEBI" id="CHEBI:67192"/>
        <dbReference type="EC" id="1.13.11.68"/>
    </reaction>
</comment>
<comment type="cofactor">
    <cofactor evidence="1">
        <name>Fe(2+)</name>
        <dbReference type="ChEBI" id="CHEBI:29033"/>
    </cofactor>
    <text evidence="1">Binds 1 Fe(2+) ion per subunit.</text>
</comment>
<comment type="biophysicochemical properties">
    <kinetics>
        <KM evidence="5">15.2 uM for beta-carotene</KM>
        <Vmax evidence="5">4.5 pmol/min/mg enzyme</Vmax>
        <text>addition of methanol to in vitro assays has a strong stimulatory effect.</text>
    </kinetics>
</comment>
<comment type="subcellular location">
    <subcellularLocation>
        <location evidence="4 6">Plastid</location>
        <location evidence="4 6">Chloroplast</location>
    </subcellularLocation>
</comment>
<comment type="tissue specificity">
    <text evidence="4 6 7">Expressed in flowers, siliques, inflorescence stems, petiole, leaves and roots.</text>
</comment>
<comment type="disruption phenotype">
    <text evidence="5 9">Increased shoot branching.</text>
</comment>
<comment type="miscellaneous">
    <text evidence="11">The branching phenotypes of the max1, ccd7/max3 and ccd8/max4 mutants can be rescued by exogenous treatment with the synthetic strigolactone analogs GR24 and 4BD.</text>
</comment>
<comment type="similarity">
    <text evidence="10">Belongs to the carotenoid oxygenase family.</text>
</comment>
<comment type="sequence caution" evidence="10">
    <conflict type="miscellaneous discrepancy">
        <sequence resource="EMBL-CDS" id="BAF01693"/>
    </conflict>
    <text>Introns retention.</text>
</comment>
<organism>
    <name type="scientific">Arabidopsis thaliana</name>
    <name type="common">Mouse-ear cress</name>
    <dbReference type="NCBI Taxonomy" id="3702"/>
    <lineage>
        <taxon>Eukaryota</taxon>
        <taxon>Viridiplantae</taxon>
        <taxon>Streptophyta</taxon>
        <taxon>Embryophyta</taxon>
        <taxon>Tracheophyta</taxon>
        <taxon>Spermatophyta</taxon>
        <taxon>Magnoliopsida</taxon>
        <taxon>eudicotyledons</taxon>
        <taxon>Gunneridae</taxon>
        <taxon>Pentapetalae</taxon>
        <taxon>rosids</taxon>
        <taxon>malvids</taxon>
        <taxon>Brassicales</taxon>
        <taxon>Brassicaceae</taxon>
        <taxon>Camelineae</taxon>
        <taxon>Arabidopsis</taxon>
    </lineage>
</organism>
<accession>Q7XJM2</accession>
<accession>F4IV47</accession>
<accession>Q0WMG3</accession>
<gene>
    <name type="primary">CCD7</name>
    <name type="synonym">MAX3</name>
    <name type="synonym">NCED7</name>
    <name type="ordered locus">At2g44990</name>
    <name type="ORF">T14P1.21</name>
</gene>
<protein>
    <recommendedName>
        <fullName>Carotenoid cleavage dioxygenase 7, chloroplastic</fullName>
        <shortName>AtCCD7</shortName>
    </recommendedName>
    <alternativeName>
        <fullName>AtNCED7</fullName>
    </alternativeName>
    <alternativeName>
        <fullName>Beta,beta-carotene 9',10'-oxygenase</fullName>
        <ecNumber>1.13.11.68</ecNumber>
    </alternativeName>
    <alternativeName>
        <fullName>Protein MORE AXILLARY BRANCHING 3</fullName>
    </alternativeName>
    <alternativeName>
        <fullName>Protein MORE AXILLARY GROWTH 3</fullName>
    </alternativeName>
</protein>